<name>PROF_CLYJA</name>
<accession>P18321</accession>
<reference key="1">
    <citation type="journal article" date="1990" name="Eur. J. Biochem.">
        <title>Primary structure of profilins from two species of Echinoidea and Physarum polycephalum.</title>
        <authorList>
            <person name="Takagi T."/>
            <person name="Mabuchi I."/>
            <person name="Hosoya H."/>
            <person name="Furuhashi K."/>
            <person name="Hatano S."/>
        </authorList>
    </citation>
    <scope>PROTEIN SEQUENCE OF 2-140</scope>
    <scope>ACETYLATION AT SER-2</scope>
</reference>
<sequence>MSWDSYIDNLVAQTKDASGTAHSDRACIIGLDGGAPWTTAGHANALKLQGTEGANIAKCFKSKDFSAFMAGGVHAEGLKYQFLREEDAKLVLAKKKGEGAITLQASKTAIVIAHCPEGGQQGNTNKGVSVIAEYLESLGM</sequence>
<evidence type="ECO:0000269" key="1">
    <source>
    </source>
</evidence>
<evidence type="ECO:0000305" key="2"/>
<organism>
    <name type="scientific">Clypeaster japonicus</name>
    <name type="common">Sand dollar</name>
    <dbReference type="NCBI Taxonomy" id="7644"/>
    <lineage>
        <taxon>Eukaryota</taxon>
        <taxon>Metazoa</taxon>
        <taxon>Echinodermata</taxon>
        <taxon>Eleutherozoa</taxon>
        <taxon>Echinozoa</taxon>
        <taxon>Echinoidea</taxon>
        <taxon>Euechinoidea</taxon>
        <taxon>Gnathostomata</taxon>
        <taxon>Clypeasteroida</taxon>
        <taxon>Clypeasteridae</taxon>
        <taxon>Clypeaster</taxon>
    </lineage>
</organism>
<keyword id="KW-0007">Acetylation</keyword>
<keyword id="KW-0009">Actin-binding</keyword>
<keyword id="KW-0963">Cytoplasm</keyword>
<keyword id="KW-0206">Cytoskeleton</keyword>
<keyword id="KW-0903">Direct protein sequencing</keyword>
<feature type="initiator methionine" description="Removed" evidence="1">
    <location>
        <position position="1"/>
    </location>
</feature>
<feature type="chain" id="PRO_0000199593" description="Profilin">
    <location>
        <begin position="2"/>
        <end position="140"/>
    </location>
</feature>
<feature type="modified residue" description="N-acetylserine" evidence="1">
    <location>
        <position position="2"/>
    </location>
</feature>
<comment type="function">
    <text>Binds to actin and affects the structure of the cytoskeleton. At high concentrations, profilin prevents the polymerization of actin, whereas it enhances it at low concentrations. By binding to PIP2, it inhibits the formation of IP3 and DG.</text>
</comment>
<comment type="subunit">
    <text>Occurs in many kinds of cells as a complex with monomeric actin in a 1:1 ratio.</text>
</comment>
<comment type="subcellular location">
    <subcellularLocation>
        <location>Cytoplasm</location>
        <location>Cytoskeleton</location>
    </subcellularLocation>
</comment>
<comment type="similarity">
    <text evidence="2">Belongs to the profilin family.</text>
</comment>
<dbReference type="PIR" id="S13197">
    <property type="entry name" value="S13197"/>
</dbReference>
<dbReference type="SMR" id="P18321"/>
<dbReference type="iPTMnet" id="P18321"/>
<dbReference type="GO" id="GO:0005938">
    <property type="term" value="C:cell cortex"/>
    <property type="evidence" value="ECO:0007669"/>
    <property type="project" value="TreeGrafter"/>
</dbReference>
<dbReference type="GO" id="GO:0005856">
    <property type="term" value="C:cytoskeleton"/>
    <property type="evidence" value="ECO:0007669"/>
    <property type="project" value="UniProtKB-SubCell"/>
</dbReference>
<dbReference type="GO" id="GO:0003785">
    <property type="term" value="F:actin monomer binding"/>
    <property type="evidence" value="ECO:0007669"/>
    <property type="project" value="TreeGrafter"/>
</dbReference>
<dbReference type="GO" id="GO:0051128">
    <property type="term" value="P:regulation of cellular component organization"/>
    <property type="evidence" value="ECO:0007669"/>
    <property type="project" value="UniProtKB-ARBA"/>
</dbReference>
<dbReference type="CDD" id="cd00148">
    <property type="entry name" value="PROF"/>
    <property type="match status" value="1"/>
</dbReference>
<dbReference type="Gene3D" id="3.30.450.30">
    <property type="entry name" value="Dynein light chain 2a, cytoplasmic"/>
    <property type="match status" value="1"/>
</dbReference>
<dbReference type="InterPro" id="IPR048278">
    <property type="entry name" value="PFN"/>
</dbReference>
<dbReference type="InterPro" id="IPR005455">
    <property type="entry name" value="PFN_euk"/>
</dbReference>
<dbReference type="InterPro" id="IPR036140">
    <property type="entry name" value="PFN_sf"/>
</dbReference>
<dbReference type="InterPro" id="IPR027310">
    <property type="entry name" value="Profilin_CS"/>
</dbReference>
<dbReference type="PANTHER" id="PTHR11604">
    <property type="entry name" value="PROFILIN"/>
    <property type="match status" value="1"/>
</dbReference>
<dbReference type="PANTHER" id="PTHR11604:SF10">
    <property type="entry name" value="PROFILIN"/>
    <property type="match status" value="1"/>
</dbReference>
<dbReference type="Pfam" id="PF00235">
    <property type="entry name" value="Profilin"/>
    <property type="match status" value="1"/>
</dbReference>
<dbReference type="PRINTS" id="PR00392">
    <property type="entry name" value="PROFILIN"/>
</dbReference>
<dbReference type="SMART" id="SM00392">
    <property type="entry name" value="PROF"/>
    <property type="match status" value="1"/>
</dbReference>
<dbReference type="SUPFAM" id="SSF55770">
    <property type="entry name" value="Profilin (actin-binding protein)"/>
    <property type="match status" value="1"/>
</dbReference>
<dbReference type="PROSITE" id="PS00414">
    <property type="entry name" value="PROFILIN"/>
    <property type="match status" value="1"/>
</dbReference>
<protein>
    <recommendedName>
        <fullName>Profilin</fullName>
    </recommendedName>
</protein>
<proteinExistence type="evidence at protein level"/>